<reference key="1">
    <citation type="submission" date="2003-03" db="EMBL/GenBank/DDBJ databases">
        <title>The complete genome sequence of Neisseria gonorrhoeae.</title>
        <authorList>
            <person name="Lewis L.A."/>
            <person name="Gillaspy A.F."/>
            <person name="McLaughlin R.E."/>
            <person name="Gipson M."/>
            <person name="Ducey T.F."/>
            <person name="Ownbey T."/>
            <person name="Hartman K."/>
            <person name="Nydick C."/>
            <person name="Carson M.B."/>
            <person name="Vaughn J."/>
            <person name="Thomson C."/>
            <person name="Song L."/>
            <person name="Lin S."/>
            <person name="Yuan X."/>
            <person name="Najar F."/>
            <person name="Zhan M."/>
            <person name="Ren Q."/>
            <person name="Zhu H."/>
            <person name="Qi S."/>
            <person name="Kenton S.M."/>
            <person name="Lai H."/>
            <person name="White J.D."/>
            <person name="Clifton S."/>
            <person name="Roe B.A."/>
            <person name="Dyer D.W."/>
        </authorList>
    </citation>
    <scope>NUCLEOTIDE SEQUENCE [LARGE SCALE GENOMIC DNA]</scope>
    <source>
        <strain>ATCC 700825 / FA 1090</strain>
    </source>
</reference>
<accession>Q5F5V5</accession>
<protein>
    <recommendedName>
        <fullName evidence="1">Cell division topological specificity factor</fullName>
    </recommendedName>
</protein>
<sequence>MSLIELLFGRKQKTATVARDRLQIIIAQERAQEGQTPDYLPTLRKELMEVLSKYVNVSLDNIRISQEKQDGMDVLELNITLPEQKKV</sequence>
<comment type="function">
    <text evidence="1">Prevents the cell division inhibition by proteins MinC and MinD at internal division sites while permitting inhibition at polar sites. This ensures cell division at the proper site by restricting the formation of a division septum at the midpoint of the long axis of the cell.</text>
</comment>
<comment type="similarity">
    <text evidence="1">Belongs to the MinE family.</text>
</comment>
<gene>
    <name evidence="1" type="primary">minE</name>
    <name type="ordered locus">NGO_1814</name>
</gene>
<proteinExistence type="inferred from homology"/>
<evidence type="ECO:0000255" key="1">
    <source>
        <dbReference type="HAMAP-Rule" id="MF_00262"/>
    </source>
</evidence>
<feature type="chain" id="PRO_0000298137" description="Cell division topological specificity factor">
    <location>
        <begin position="1"/>
        <end position="87"/>
    </location>
</feature>
<keyword id="KW-0131">Cell cycle</keyword>
<keyword id="KW-0132">Cell division</keyword>
<keyword id="KW-1185">Reference proteome</keyword>
<organism>
    <name type="scientific">Neisseria gonorrhoeae (strain ATCC 700825 / FA 1090)</name>
    <dbReference type="NCBI Taxonomy" id="242231"/>
    <lineage>
        <taxon>Bacteria</taxon>
        <taxon>Pseudomonadati</taxon>
        <taxon>Pseudomonadota</taxon>
        <taxon>Betaproteobacteria</taxon>
        <taxon>Neisseriales</taxon>
        <taxon>Neisseriaceae</taxon>
        <taxon>Neisseria</taxon>
    </lineage>
</organism>
<dbReference type="EMBL" id="AE004969">
    <property type="protein sequence ID" value="AAW90432.1"/>
    <property type="molecule type" value="Genomic_DNA"/>
</dbReference>
<dbReference type="RefSeq" id="WP_003690052.1">
    <property type="nucleotide sequence ID" value="NC_002946.2"/>
</dbReference>
<dbReference type="RefSeq" id="YP_208844.1">
    <property type="nucleotide sequence ID" value="NC_002946.2"/>
</dbReference>
<dbReference type="BMRB" id="Q5F5V5"/>
<dbReference type="SMR" id="Q5F5V5"/>
<dbReference type="STRING" id="242231.NGO_1814"/>
<dbReference type="GeneID" id="66754325"/>
<dbReference type="KEGG" id="ngo:NGO_1814"/>
<dbReference type="PATRIC" id="fig|242231.10.peg.2179"/>
<dbReference type="HOGENOM" id="CLU_137929_2_1_4"/>
<dbReference type="Proteomes" id="UP000000535">
    <property type="component" value="Chromosome"/>
</dbReference>
<dbReference type="GO" id="GO:0051301">
    <property type="term" value="P:cell division"/>
    <property type="evidence" value="ECO:0007669"/>
    <property type="project" value="UniProtKB-KW"/>
</dbReference>
<dbReference type="GO" id="GO:0032955">
    <property type="term" value="P:regulation of division septum assembly"/>
    <property type="evidence" value="ECO:0007669"/>
    <property type="project" value="InterPro"/>
</dbReference>
<dbReference type="FunFam" id="3.30.1070.10:FF:000001">
    <property type="entry name" value="Cell division topological specificity factor"/>
    <property type="match status" value="1"/>
</dbReference>
<dbReference type="Gene3D" id="3.30.1070.10">
    <property type="entry name" value="Cell division topological specificity factor MinE"/>
    <property type="match status" value="1"/>
</dbReference>
<dbReference type="HAMAP" id="MF_00262">
    <property type="entry name" value="MinE"/>
    <property type="match status" value="1"/>
</dbReference>
<dbReference type="InterPro" id="IPR005527">
    <property type="entry name" value="MinE"/>
</dbReference>
<dbReference type="InterPro" id="IPR036707">
    <property type="entry name" value="MinE_sf"/>
</dbReference>
<dbReference type="NCBIfam" id="TIGR01215">
    <property type="entry name" value="minE"/>
    <property type="match status" value="1"/>
</dbReference>
<dbReference type="NCBIfam" id="NF001422">
    <property type="entry name" value="PRK00296.1"/>
    <property type="match status" value="1"/>
</dbReference>
<dbReference type="NCBIfam" id="NF010595">
    <property type="entry name" value="PRK13989.1"/>
    <property type="match status" value="1"/>
</dbReference>
<dbReference type="Pfam" id="PF03776">
    <property type="entry name" value="MinE"/>
    <property type="match status" value="1"/>
</dbReference>
<dbReference type="SUPFAM" id="SSF55229">
    <property type="entry name" value="Cell division protein MinE topological specificity domain"/>
    <property type="match status" value="1"/>
</dbReference>
<name>MINE_NEIG1</name>